<evidence type="ECO:0000255" key="1">
    <source>
        <dbReference type="HAMAP-Rule" id="MF_01329"/>
    </source>
</evidence>
<comment type="function">
    <text evidence="1">A core subunit of photosystem II (PSII), probably helps stabilize the reaction center.</text>
</comment>
<comment type="subunit">
    <text evidence="1">PSII is composed of 1 copy each of membrane proteins PsbA, PsbB, PsbC, PsbD, PsbE, PsbF, PsbH, PsbI, PsbJ, PsbK, PsbL, PsbM, PsbT, PsbX, PsbY, PsbZ, Psb30/Ycf12, peripheral proteins PsbO, CyanoQ (PsbQ), PsbU, PsbV and a large number of cofactors. It forms dimeric complexes.</text>
</comment>
<comment type="subcellular location">
    <subcellularLocation>
        <location evidence="1">Cellular thylakoid membrane</location>
        <topology evidence="1">Single-pass membrane protein</topology>
    </subcellularLocation>
</comment>
<comment type="similarity">
    <text evidence="1">Belongs to the Psb30/Ycf12 family.</text>
</comment>
<organism>
    <name type="scientific">Nostoc sp. (strain PCC 7120 / SAG 25.82 / UTEX 2576)</name>
    <dbReference type="NCBI Taxonomy" id="103690"/>
    <lineage>
        <taxon>Bacteria</taxon>
        <taxon>Bacillati</taxon>
        <taxon>Cyanobacteriota</taxon>
        <taxon>Cyanophyceae</taxon>
        <taxon>Nostocales</taxon>
        <taxon>Nostocaceae</taxon>
        <taxon>Nostoc</taxon>
    </lineage>
</organism>
<keyword id="KW-0472">Membrane</keyword>
<keyword id="KW-0602">Photosynthesis</keyword>
<keyword id="KW-0604">Photosystem II</keyword>
<keyword id="KW-1185">Reference proteome</keyword>
<keyword id="KW-0793">Thylakoid</keyword>
<keyword id="KW-0812">Transmembrane</keyword>
<keyword id="KW-1133">Transmembrane helix</keyword>
<protein>
    <recommendedName>
        <fullName evidence="1">Photosystem II reaction center protein Psb30</fullName>
    </recommendedName>
    <alternativeName>
        <fullName evidence="1">Photosystem II reaction center protein Ycf12</fullName>
    </alternativeName>
</protein>
<dbReference type="EMBL" id="BA000019">
    <property type="protein sequence ID" value="BAB76827.1"/>
    <property type="molecule type" value="Genomic_DNA"/>
</dbReference>
<dbReference type="PIR" id="AH2446">
    <property type="entry name" value="AH2446"/>
</dbReference>
<dbReference type="RefSeq" id="WP_010999254.1">
    <property type="nucleotide sequence ID" value="NZ_RSCN01000052.1"/>
</dbReference>
<dbReference type="SMR" id="Q8YM13"/>
<dbReference type="STRING" id="103690.gene:10497187"/>
<dbReference type="KEGG" id="ana:asl5128"/>
<dbReference type="eggNOG" id="ENOG503209K">
    <property type="taxonomic scope" value="Bacteria"/>
</dbReference>
<dbReference type="OrthoDB" id="516821at2"/>
<dbReference type="Proteomes" id="UP000002483">
    <property type="component" value="Chromosome"/>
</dbReference>
<dbReference type="GO" id="GO:0009523">
    <property type="term" value="C:photosystem II"/>
    <property type="evidence" value="ECO:0007669"/>
    <property type="project" value="UniProtKB-KW"/>
</dbReference>
<dbReference type="GO" id="GO:0031676">
    <property type="term" value="C:plasma membrane-derived thylakoid membrane"/>
    <property type="evidence" value="ECO:0007669"/>
    <property type="project" value="UniProtKB-SubCell"/>
</dbReference>
<dbReference type="GO" id="GO:0015979">
    <property type="term" value="P:photosynthesis"/>
    <property type="evidence" value="ECO:0007669"/>
    <property type="project" value="UniProtKB-KW"/>
</dbReference>
<dbReference type="HAMAP" id="MF_01329">
    <property type="entry name" value="PSII_Psb30_Ycf12"/>
    <property type="match status" value="1"/>
</dbReference>
<dbReference type="InterPro" id="IPR010284">
    <property type="entry name" value="PSII_Ycf12_core-subunit"/>
</dbReference>
<dbReference type="NCBIfam" id="NF010239">
    <property type="entry name" value="PRK13686.1"/>
    <property type="match status" value="1"/>
</dbReference>
<dbReference type="Pfam" id="PF05969">
    <property type="entry name" value="PSII_Ycf12"/>
    <property type="match status" value="1"/>
</dbReference>
<sequence>MFDALANINWEVIFQLTSVALIIIAGPAVIFVLAFRNGNL</sequence>
<feature type="chain" id="PRO_0000059041" description="Photosystem II reaction center protein Psb30">
    <location>
        <begin position="1"/>
        <end position="40"/>
    </location>
</feature>
<feature type="transmembrane region" description="Helical" evidence="1">
    <location>
        <begin position="12"/>
        <end position="32"/>
    </location>
</feature>
<name>PSB30_NOSS1</name>
<reference key="1">
    <citation type="journal article" date="2001" name="DNA Res.">
        <title>Complete genomic sequence of the filamentous nitrogen-fixing cyanobacterium Anabaena sp. strain PCC 7120.</title>
        <authorList>
            <person name="Kaneko T."/>
            <person name="Nakamura Y."/>
            <person name="Wolk C.P."/>
            <person name="Kuritz T."/>
            <person name="Sasamoto S."/>
            <person name="Watanabe A."/>
            <person name="Iriguchi M."/>
            <person name="Ishikawa A."/>
            <person name="Kawashima K."/>
            <person name="Kimura T."/>
            <person name="Kishida Y."/>
            <person name="Kohara M."/>
            <person name="Matsumoto M."/>
            <person name="Matsuno A."/>
            <person name="Muraki A."/>
            <person name="Nakazaki N."/>
            <person name="Shimpo S."/>
            <person name="Sugimoto M."/>
            <person name="Takazawa M."/>
            <person name="Yamada M."/>
            <person name="Yasuda M."/>
            <person name="Tabata S."/>
        </authorList>
    </citation>
    <scope>NUCLEOTIDE SEQUENCE [LARGE SCALE GENOMIC DNA]</scope>
    <source>
        <strain>PCC 7120 / SAG 25.82 / UTEX 2576</strain>
    </source>
</reference>
<proteinExistence type="inferred from homology"/>
<accession>Q8YM13</accession>
<gene>
    <name evidence="1" type="primary">psb30</name>
    <name evidence="1" type="synonym">ycf12</name>
    <name type="ordered locus">asl5128</name>
</gene>